<dbReference type="EC" id="2.3.2.6" evidence="1"/>
<dbReference type="EMBL" id="AE013598">
    <property type="protein sequence ID" value="AAW75805.1"/>
    <property type="status" value="ALT_INIT"/>
    <property type="molecule type" value="Genomic_DNA"/>
</dbReference>
<dbReference type="SMR" id="Q5GZR6"/>
<dbReference type="STRING" id="291331.XOO2551"/>
<dbReference type="KEGG" id="xoo:XOO2551"/>
<dbReference type="HOGENOM" id="CLU_075045_0_0_6"/>
<dbReference type="Proteomes" id="UP000006735">
    <property type="component" value="Chromosome"/>
</dbReference>
<dbReference type="GO" id="GO:0005737">
    <property type="term" value="C:cytoplasm"/>
    <property type="evidence" value="ECO:0007669"/>
    <property type="project" value="UniProtKB-SubCell"/>
</dbReference>
<dbReference type="GO" id="GO:0008914">
    <property type="term" value="F:leucyl-tRNA--protein transferase activity"/>
    <property type="evidence" value="ECO:0007669"/>
    <property type="project" value="UniProtKB-UniRule"/>
</dbReference>
<dbReference type="GO" id="GO:0030163">
    <property type="term" value="P:protein catabolic process"/>
    <property type="evidence" value="ECO:0007669"/>
    <property type="project" value="UniProtKB-UniRule"/>
</dbReference>
<dbReference type="FunFam" id="3.30.70.3550:FF:000001">
    <property type="entry name" value="Leucyl/phenylalanyl-tRNA--protein transferase"/>
    <property type="match status" value="1"/>
</dbReference>
<dbReference type="Gene3D" id="3.40.630.70">
    <property type="entry name" value="Leucyl/phenylalanyl-tRNA-protein transferase, C-terminal domain"/>
    <property type="match status" value="1"/>
</dbReference>
<dbReference type="Gene3D" id="3.30.70.3550">
    <property type="entry name" value="Leucyl/phenylalanyl-tRNA-protein transferase, N-terminal domain"/>
    <property type="match status" value="1"/>
</dbReference>
<dbReference type="HAMAP" id="MF_00688">
    <property type="entry name" value="Leu_Phe_trans"/>
    <property type="match status" value="1"/>
</dbReference>
<dbReference type="InterPro" id="IPR016181">
    <property type="entry name" value="Acyl_CoA_acyltransferase"/>
</dbReference>
<dbReference type="InterPro" id="IPR004616">
    <property type="entry name" value="Leu/Phe-tRNA_Trfase"/>
</dbReference>
<dbReference type="InterPro" id="IPR042203">
    <property type="entry name" value="Leu/Phe-tRNA_Trfase_C"/>
</dbReference>
<dbReference type="InterPro" id="IPR042221">
    <property type="entry name" value="Leu/Phe-tRNA_Trfase_N"/>
</dbReference>
<dbReference type="NCBIfam" id="TIGR00667">
    <property type="entry name" value="aat"/>
    <property type="match status" value="1"/>
</dbReference>
<dbReference type="PANTHER" id="PTHR30098">
    <property type="entry name" value="LEUCYL/PHENYLALANYL-TRNA--PROTEIN TRANSFERASE"/>
    <property type="match status" value="1"/>
</dbReference>
<dbReference type="PANTHER" id="PTHR30098:SF2">
    <property type="entry name" value="LEUCYL_PHENYLALANYL-TRNA--PROTEIN TRANSFERASE"/>
    <property type="match status" value="1"/>
</dbReference>
<dbReference type="Pfam" id="PF03588">
    <property type="entry name" value="Leu_Phe_trans"/>
    <property type="match status" value="1"/>
</dbReference>
<dbReference type="SUPFAM" id="SSF55729">
    <property type="entry name" value="Acyl-CoA N-acyltransferases (Nat)"/>
    <property type="match status" value="1"/>
</dbReference>
<protein>
    <recommendedName>
        <fullName evidence="1">Leucyl/phenylalanyl-tRNA--protein transferase</fullName>
        <ecNumber evidence="1">2.3.2.6</ecNumber>
    </recommendedName>
    <alternativeName>
        <fullName evidence="1">L/F-transferase</fullName>
    </alternativeName>
    <alternativeName>
        <fullName evidence="1">Leucyltransferase</fullName>
    </alternativeName>
    <alternativeName>
        <fullName evidence="1">Phenyalanyltransferase</fullName>
    </alternativeName>
</protein>
<organism>
    <name type="scientific">Xanthomonas oryzae pv. oryzae (strain KACC10331 / KXO85)</name>
    <dbReference type="NCBI Taxonomy" id="291331"/>
    <lineage>
        <taxon>Bacteria</taxon>
        <taxon>Pseudomonadati</taxon>
        <taxon>Pseudomonadota</taxon>
        <taxon>Gammaproteobacteria</taxon>
        <taxon>Lysobacterales</taxon>
        <taxon>Lysobacteraceae</taxon>
        <taxon>Xanthomonas</taxon>
    </lineage>
</organism>
<accession>Q5GZR6</accession>
<reference key="1">
    <citation type="journal article" date="2005" name="Nucleic Acids Res.">
        <title>The genome sequence of Xanthomonas oryzae pathovar oryzae KACC10331, the bacterial blight pathogen of rice.</title>
        <authorList>
            <person name="Lee B.-M."/>
            <person name="Park Y.-J."/>
            <person name="Park D.-S."/>
            <person name="Kang H.-W."/>
            <person name="Kim J.-G."/>
            <person name="Song E.-S."/>
            <person name="Park I.-C."/>
            <person name="Yoon U.-H."/>
            <person name="Hahn J.-H."/>
            <person name="Koo B.-S."/>
            <person name="Lee G.-B."/>
            <person name="Kim H."/>
            <person name="Park H.-S."/>
            <person name="Yoon K.-O."/>
            <person name="Kim J.-H."/>
            <person name="Jung C.-H."/>
            <person name="Koh N.-H."/>
            <person name="Seo J.-S."/>
            <person name="Go S.-J."/>
        </authorList>
    </citation>
    <scope>NUCLEOTIDE SEQUENCE [LARGE SCALE GENOMIC DNA]</scope>
    <source>
        <strain>KACC10331 / KXO85</strain>
    </source>
</reference>
<gene>
    <name evidence="1" type="primary">aat</name>
    <name type="ordered locus">XOO2551</name>
</gene>
<feature type="chain" id="PRO_0000258112" description="Leucyl/phenylalanyl-tRNA--protein transferase">
    <location>
        <begin position="1"/>
        <end position="250"/>
    </location>
</feature>
<evidence type="ECO:0000255" key="1">
    <source>
        <dbReference type="HAMAP-Rule" id="MF_00688"/>
    </source>
</evidence>
<evidence type="ECO:0000305" key="2"/>
<sequence length="250" mass="27273">MTPFRRPIVLATSASAPFPPAEAALTDPDGLLAVGGDLSPQRLLNAYAHGIFPWYSDGRPILWWSPDPRMVFRTDGVRLSSRFKRQLRASTWTVRADTAFEQVIDACAASPRPGQDGTWITAEMQQAYIALHRLGHAHSIEVFDGARLVGGIYGVAVGRMFFGESMFSGESGGSKVALAALAADLHGRGWPLIDAQVENPHLLSMGAERLPRAEFLHDVQRQVALAEQPGSWSQRYGEHAASDLCETHLT</sequence>
<name>LFTR_XANOR</name>
<keyword id="KW-0012">Acyltransferase</keyword>
<keyword id="KW-0963">Cytoplasm</keyword>
<keyword id="KW-1185">Reference proteome</keyword>
<keyword id="KW-0808">Transferase</keyword>
<comment type="function">
    <text evidence="1">Functions in the N-end rule pathway of protein degradation where it conjugates Leu, Phe and, less efficiently, Met from aminoacyl-tRNAs to the N-termini of proteins containing an N-terminal arginine or lysine.</text>
</comment>
<comment type="catalytic activity">
    <reaction evidence="1">
        <text>N-terminal L-lysyl-[protein] + L-leucyl-tRNA(Leu) = N-terminal L-leucyl-L-lysyl-[protein] + tRNA(Leu) + H(+)</text>
        <dbReference type="Rhea" id="RHEA:12340"/>
        <dbReference type="Rhea" id="RHEA-COMP:9613"/>
        <dbReference type="Rhea" id="RHEA-COMP:9622"/>
        <dbReference type="Rhea" id="RHEA-COMP:12670"/>
        <dbReference type="Rhea" id="RHEA-COMP:12671"/>
        <dbReference type="ChEBI" id="CHEBI:15378"/>
        <dbReference type="ChEBI" id="CHEBI:65249"/>
        <dbReference type="ChEBI" id="CHEBI:78442"/>
        <dbReference type="ChEBI" id="CHEBI:78494"/>
        <dbReference type="ChEBI" id="CHEBI:133043"/>
        <dbReference type="EC" id="2.3.2.6"/>
    </reaction>
</comment>
<comment type="catalytic activity">
    <reaction evidence="1">
        <text>N-terminal L-arginyl-[protein] + L-leucyl-tRNA(Leu) = N-terminal L-leucyl-L-arginyl-[protein] + tRNA(Leu) + H(+)</text>
        <dbReference type="Rhea" id="RHEA:50416"/>
        <dbReference type="Rhea" id="RHEA-COMP:9613"/>
        <dbReference type="Rhea" id="RHEA-COMP:9622"/>
        <dbReference type="Rhea" id="RHEA-COMP:12672"/>
        <dbReference type="Rhea" id="RHEA-COMP:12673"/>
        <dbReference type="ChEBI" id="CHEBI:15378"/>
        <dbReference type="ChEBI" id="CHEBI:64719"/>
        <dbReference type="ChEBI" id="CHEBI:78442"/>
        <dbReference type="ChEBI" id="CHEBI:78494"/>
        <dbReference type="ChEBI" id="CHEBI:133044"/>
        <dbReference type="EC" id="2.3.2.6"/>
    </reaction>
</comment>
<comment type="catalytic activity">
    <reaction evidence="1">
        <text>L-phenylalanyl-tRNA(Phe) + an N-terminal L-alpha-aminoacyl-[protein] = an N-terminal L-phenylalanyl-L-alpha-aminoacyl-[protein] + tRNA(Phe)</text>
        <dbReference type="Rhea" id="RHEA:43632"/>
        <dbReference type="Rhea" id="RHEA-COMP:9668"/>
        <dbReference type="Rhea" id="RHEA-COMP:9699"/>
        <dbReference type="Rhea" id="RHEA-COMP:10636"/>
        <dbReference type="Rhea" id="RHEA-COMP:10637"/>
        <dbReference type="ChEBI" id="CHEBI:78442"/>
        <dbReference type="ChEBI" id="CHEBI:78531"/>
        <dbReference type="ChEBI" id="CHEBI:78597"/>
        <dbReference type="ChEBI" id="CHEBI:83561"/>
        <dbReference type="EC" id="2.3.2.6"/>
    </reaction>
</comment>
<comment type="subcellular location">
    <subcellularLocation>
        <location evidence="1">Cytoplasm</location>
    </subcellularLocation>
</comment>
<comment type="similarity">
    <text evidence="1">Belongs to the L/F-transferase family.</text>
</comment>
<comment type="sequence caution" evidence="2">
    <conflict type="erroneous initiation">
        <sequence resource="EMBL-CDS" id="AAW75805"/>
    </conflict>
</comment>
<proteinExistence type="inferred from homology"/>